<keyword id="KW-0007">Acetylation</keyword>
<keyword id="KW-0106">Calcium</keyword>
<keyword id="KW-0130">Cell adhesion</keyword>
<keyword id="KW-1003">Cell membrane</keyword>
<keyword id="KW-0325">Glycoprotein</keyword>
<keyword id="KW-0472">Membrane</keyword>
<keyword id="KW-1185">Reference proteome</keyword>
<keyword id="KW-0677">Repeat</keyword>
<keyword id="KW-0732">Signal</keyword>
<keyword id="KW-0812">Transmembrane</keyword>
<keyword id="KW-1133">Transmembrane helix</keyword>
<dbReference type="RefSeq" id="NP_001013032.3">
    <property type="nucleotide sequence ID" value="NM_001013014.4"/>
</dbReference>
<dbReference type="SMR" id="Q5DRC9"/>
<dbReference type="FunCoup" id="Q5DRC9">
    <property type="interactions" value="88"/>
</dbReference>
<dbReference type="STRING" id="9598.ENSPTRP00000029634"/>
<dbReference type="GlyCosmos" id="Q5DRC9">
    <property type="glycosylation" value="4 sites, No reported glycans"/>
</dbReference>
<dbReference type="PaxDb" id="9598-ENSPTRP00000029634"/>
<dbReference type="GeneID" id="471660"/>
<dbReference type="eggNOG" id="KOG3594">
    <property type="taxonomic scope" value="Eukaryota"/>
</dbReference>
<dbReference type="InParanoid" id="Q5DRC9"/>
<dbReference type="Proteomes" id="UP000002277">
    <property type="component" value="Unplaced"/>
</dbReference>
<dbReference type="GO" id="GO:0005886">
    <property type="term" value="C:plasma membrane"/>
    <property type="evidence" value="ECO:0000318"/>
    <property type="project" value="GO_Central"/>
</dbReference>
<dbReference type="GO" id="GO:0005509">
    <property type="term" value="F:calcium ion binding"/>
    <property type="evidence" value="ECO:0007669"/>
    <property type="project" value="InterPro"/>
</dbReference>
<dbReference type="GO" id="GO:0007155">
    <property type="term" value="P:cell adhesion"/>
    <property type="evidence" value="ECO:0000318"/>
    <property type="project" value="GO_Central"/>
</dbReference>
<dbReference type="GO" id="GO:0007156">
    <property type="term" value="P:homophilic cell adhesion via plasma membrane adhesion molecules"/>
    <property type="evidence" value="ECO:0007669"/>
    <property type="project" value="InterPro"/>
</dbReference>
<dbReference type="GO" id="GO:0007399">
    <property type="term" value="P:nervous system development"/>
    <property type="evidence" value="ECO:0007669"/>
    <property type="project" value="UniProtKB-ARBA"/>
</dbReference>
<dbReference type="CDD" id="cd11304">
    <property type="entry name" value="Cadherin_repeat"/>
    <property type="match status" value="5"/>
</dbReference>
<dbReference type="FunFam" id="2.60.40.60:FF:000001">
    <property type="entry name" value="Protocadherin alpha 2"/>
    <property type="match status" value="1"/>
</dbReference>
<dbReference type="FunFam" id="2.60.40.60:FF:000002">
    <property type="entry name" value="Protocadherin alpha 2"/>
    <property type="match status" value="1"/>
</dbReference>
<dbReference type="FunFam" id="2.60.40.60:FF:000006">
    <property type="entry name" value="Protocadherin alpha 2"/>
    <property type="match status" value="1"/>
</dbReference>
<dbReference type="FunFam" id="2.60.40.60:FF:000046">
    <property type="entry name" value="Protocadherin beta 5"/>
    <property type="match status" value="1"/>
</dbReference>
<dbReference type="FunFam" id="2.60.40.60:FF:000309">
    <property type="entry name" value="Protocadherin beta-8"/>
    <property type="match status" value="1"/>
</dbReference>
<dbReference type="FunFam" id="2.60.40.60:FF:000018">
    <property type="entry name" value="Protocadherin gamma c3"/>
    <property type="match status" value="1"/>
</dbReference>
<dbReference type="Gene3D" id="2.60.40.60">
    <property type="entry name" value="Cadherins"/>
    <property type="match status" value="6"/>
</dbReference>
<dbReference type="InterPro" id="IPR002126">
    <property type="entry name" value="Cadherin-like_dom"/>
</dbReference>
<dbReference type="InterPro" id="IPR015919">
    <property type="entry name" value="Cadherin-like_sf"/>
</dbReference>
<dbReference type="InterPro" id="IPR032455">
    <property type="entry name" value="Cadherin_C"/>
</dbReference>
<dbReference type="InterPro" id="IPR020894">
    <property type="entry name" value="Cadherin_CS"/>
</dbReference>
<dbReference type="InterPro" id="IPR013164">
    <property type="entry name" value="Cadherin_N"/>
</dbReference>
<dbReference type="InterPro" id="IPR050174">
    <property type="entry name" value="Protocadherin/Cadherin-CA"/>
</dbReference>
<dbReference type="PANTHER" id="PTHR24028">
    <property type="entry name" value="CADHERIN-87A"/>
    <property type="match status" value="1"/>
</dbReference>
<dbReference type="PANTHER" id="PTHR24028:SF90">
    <property type="entry name" value="PROTOCADHERIN BETA-5"/>
    <property type="match status" value="1"/>
</dbReference>
<dbReference type="Pfam" id="PF00028">
    <property type="entry name" value="Cadherin"/>
    <property type="match status" value="5"/>
</dbReference>
<dbReference type="Pfam" id="PF08266">
    <property type="entry name" value="Cadherin_2"/>
    <property type="match status" value="1"/>
</dbReference>
<dbReference type="Pfam" id="PF16492">
    <property type="entry name" value="Cadherin_C_2"/>
    <property type="match status" value="1"/>
</dbReference>
<dbReference type="PRINTS" id="PR00205">
    <property type="entry name" value="CADHERIN"/>
</dbReference>
<dbReference type="SMART" id="SM00112">
    <property type="entry name" value="CA"/>
    <property type="match status" value="5"/>
</dbReference>
<dbReference type="SUPFAM" id="SSF49313">
    <property type="entry name" value="Cadherin-like"/>
    <property type="match status" value="6"/>
</dbReference>
<dbReference type="PROSITE" id="PS00232">
    <property type="entry name" value="CADHERIN_1"/>
    <property type="match status" value="4"/>
</dbReference>
<dbReference type="PROSITE" id="PS50268">
    <property type="entry name" value="CADHERIN_2"/>
    <property type="match status" value="6"/>
</dbReference>
<name>PCDB5_PANTR</name>
<accession>Q5DRC9</accession>
<protein>
    <recommendedName>
        <fullName>Protocadherin beta-5</fullName>
        <shortName>PCDH-beta-5</shortName>
    </recommendedName>
</protein>
<comment type="function">
    <text>Potential calcium-dependent cell-adhesion protein. May be involved in the establishment and maintenance of specific neuronal connections in the brain.</text>
</comment>
<comment type="subcellular location">
    <subcellularLocation>
        <location evidence="1">Cell membrane</location>
        <topology evidence="1">Single-pass type I membrane protein</topology>
    </subcellularLocation>
</comment>
<reference key="1">
    <citation type="journal article" date="2005" name="Nature">
        <title>Initial sequence of the chimpanzee genome and comparison with the human genome.</title>
        <authorList>
            <consortium name="Chimpanzee sequencing and analysis consortium"/>
        </authorList>
    </citation>
    <scope>NUCLEOTIDE SEQUENCE [LARGE SCALE GENOMIC DNA]</scope>
</reference>
<reference key="2">
    <citation type="journal article" date="2005" name="Genetics">
        <title>Comparative genomics and diversifying selection of the clustered vertebrate protocadherin genes.</title>
        <authorList>
            <person name="Wu Q."/>
        </authorList>
    </citation>
    <scope>IDENTIFICATION</scope>
</reference>
<gene>
    <name type="primary">PCDHB5</name>
</gene>
<proteinExistence type="inferred from homology"/>
<evidence type="ECO:0000250" key="1"/>
<evidence type="ECO:0000250" key="2">
    <source>
        <dbReference type="UniProtKB" id="Q9Y5E7"/>
    </source>
</evidence>
<evidence type="ECO:0000255" key="3"/>
<evidence type="ECO:0000255" key="4">
    <source>
        <dbReference type="PROSITE-ProRule" id="PRU00043"/>
    </source>
</evidence>
<sequence length="795" mass="86393">METALAKTPQKRQVMFLAILLLLWEAGSEAVRYSIPEETESGYSVANLAKDLGLGVGELATRGARMHYKGNKELLQLDIKTGNLLLYEKLDREVICGATEPCILHFQLLLENPVQFFQTDLQLTDINDHSPEFPEKEMLLKIPESTQPGTVFPLKVAQDFDIGSNAVQNYTISPNSHFHVATHNRGDGRKYPELVLDKALDREERPELSLTLTALDGGAPPRSGTTTIRIVVLDNNDNAPEFLQSLYEVQVPENSPLNSLVVVVSARDLDAGAYGSVAYALFQGDEVTQPFVIDEKTGEIRLKRALDFEATPYYNVEIVATDGGGLSGKCTVAMEVVDVNDNAPELTMSTLSSPIPENAPETVVAVFSVSDPDSGDNGRMICSIQNDLPFLLKPTLKNFYTLVTQRTLDRESQAEYNITITVTDMGTPRLKTEHNITVLVSDVNDNAPAFTQTSYTLFVRENNSPALQIGSVSATDRDSGTNAQVTYSLLPPQNPHLRLASLVSINADNGHLFALRSLDYEALQAFEFRVGATDRGSPALSSEALVRVLVLDANDNSPFVLYPLQNGSAPCTELVPRAAEPGYLVTKVVAVDGDSGQNAWLSYQLLKATEPGLFSMWAHNGEVRTARLLSERDAAKHRLVVLVKDNGEPPRSATATLHVLLVDGFSQPYLPLPEAAPAQAQADSLTVYLVVALASVSSLFLFSVLLFVAVRLCRRSRAAPVGRCSVPEGPFPGHLVDVSGTGILSQSYQYEVCLTGDSGAGEFKFLKPIIPNLLPQGASEEIGKTAAFRNSFGLN</sequence>
<organism>
    <name type="scientific">Pan troglodytes</name>
    <name type="common">Chimpanzee</name>
    <dbReference type="NCBI Taxonomy" id="9598"/>
    <lineage>
        <taxon>Eukaryota</taxon>
        <taxon>Metazoa</taxon>
        <taxon>Chordata</taxon>
        <taxon>Craniata</taxon>
        <taxon>Vertebrata</taxon>
        <taxon>Euteleostomi</taxon>
        <taxon>Mammalia</taxon>
        <taxon>Eutheria</taxon>
        <taxon>Euarchontoglires</taxon>
        <taxon>Primates</taxon>
        <taxon>Haplorrhini</taxon>
        <taxon>Catarrhini</taxon>
        <taxon>Hominidae</taxon>
        <taxon>Pan</taxon>
    </lineage>
</organism>
<feature type="signal peptide" evidence="3">
    <location>
        <begin position="1"/>
        <end position="30"/>
    </location>
</feature>
<feature type="chain" id="PRO_0000003923" description="Protocadherin beta-5">
    <location>
        <begin position="31"/>
        <end position="795"/>
    </location>
</feature>
<feature type="topological domain" description="Extracellular" evidence="3">
    <location>
        <begin position="31"/>
        <end position="689"/>
    </location>
</feature>
<feature type="transmembrane region" description="Helical" evidence="3">
    <location>
        <begin position="690"/>
        <end position="710"/>
    </location>
</feature>
<feature type="topological domain" description="Cytoplasmic" evidence="3">
    <location>
        <begin position="711"/>
        <end position="795"/>
    </location>
</feature>
<feature type="domain" description="Cadherin 1" evidence="4">
    <location>
        <begin position="35"/>
        <end position="133"/>
    </location>
</feature>
<feature type="domain" description="Cadherin 2" evidence="4">
    <location>
        <begin position="138"/>
        <end position="242"/>
    </location>
</feature>
<feature type="domain" description="Cadherin 3" evidence="4">
    <location>
        <begin position="247"/>
        <end position="346"/>
    </location>
</feature>
<feature type="domain" description="Cadherin 4" evidence="4">
    <location>
        <begin position="351"/>
        <end position="450"/>
    </location>
</feature>
<feature type="domain" description="Cadherin 5" evidence="4">
    <location>
        <begin position="455"/>
        <end position="560"/>
    </location>
</feature>
<feature type="domain" description="Cadherin 6" evidence="4">
    <location>
        <begin position="567"/>
        <end position="670"/>
    </location>
</feature>
<feature type="modified residue" description="N6-acetyllysine" evidence="2">
    <location>
        <position position="296"/>
    </location>
</feature>
<feature type="glycosylation site" description="N-linked (GlcNAc...) asparagine" evidence="3">
    <location>
        <position position="169"/>
    </location>
</feature>
<feature type="glycosylation site" description="N-linked (GlcNAc...) asparagine" evidence="3">
    <location>
        <position position="417"/>
    </location>
</feature>
<feature type="glycosylation site" description="N-linked (GlcNAc...) asparagine" evidence="3">
    <location>
        <position position="435"/>
    </location>
</feature>
<feature type="glycosylation site" description="N-linked (GlcNAc...) asparagine" evidence="3">
    <location>
        <position position="566"/>
    </location>
</feature>